<reference key="1">
    <citation type="journal article" date="2001" name="Nature">
        <title>Complete genome sequence of Salmonella enterica serovar Typhimurium LT2.</title>
        <authorList>
            <person name="McClelland M."/>
            <person name="Sanderson K.E."/>
            <person name="Spieth J."/>
            <person name="Clifton S.W."/>
            <person name="Latreille P."/>
            <person name="Courtney L."/>
            <person name="Porwollik S."/>
            <person name="Ali J."/>
            <person name="Dante M."/>
            <person name="Du F."/>
            <person name="Hou S."/>
            <person name="Layman D."/>
            <person name="Leonard S."/>
            <person name="Nguyen C."/>
            <person name="Scott K."/>
            <person name="Holmes A."/>
            <person name="Grewal N."/>
            <person name="Mulvaney E."/>
            <person name="Ryan E."/>
            <person name="Sun H."/>
            <person name="Florea L."/>
            <person name="Miller W."/>
            <person name="Stoneking T."/>
            <person name="Nhan M."/>
            <person name="Waterston R."/>
            <person name="Wilson R.K."/>
        </authorList>
    </citation>
    <scope>NUCLEOTIDE SEQUENCE [LARGE SCALE GENOMIC DNA]</scope>
    <source>
        <strain>LT2 / SGSC1412 / ATCC 700720</strain>
    </source>
</reference>
<proteinExistence type="inferred from homology"/>
<accession>P58630</accession>
<comment type="function">
    <text evidence="1">Nucleoside triphosphate pyrophosphatase that hydrolyzes dTTP and UTP. May have a dual role in cell division arrest and in preventing the incorporation of modified nucleotides into cellular nucleic acids.</text>
</comment>
<comment type="catalytic activity">
    <reaction evidence="1">
        <text>dTTP + H2O = dTMP + diphosphate + H(+)</text>
        <dbReference type="Rhea" id="RHEA:28534"/>
        <dbReference type="ChEBI" id="CHEBI:15377"/>
        <dbReference type="ChEBI" id="CHEBI:15378"/>
        <dbReference type="ChEBI" id="CHEBI:33019"/>
        <dbReference type="ChEBI" id="CHEBI:37568"/>
        <dbReference type="ChEBI" id="CHEBI:63528"/>
        <dbReference type="EC" id="3.6.1.9"/>
    </reaction>
</comment>
<comment type="catalytic activity">
    <reaction evidence="1">
        <text>UTP + H2O = UMP + diphosphate + H(+)</text>
        <dbReference type="Rhea" id="RHEA:29395"/>
        <dbReference type="ChEBI" id="CHEBI:15377"/>
        <dbReference type="ChEBI" id="CHEBI:15378"/>
        <dbReference type="ChEBI" id="CHEBI:33019"/>
        <dbReference type="ChEBI" id="CHEBI:46398"/>
        <dbReference type="ChEBI" id="CHEBI:57865"/>
        <dbReference type="EC" id="3.6.1.9"/>
    </reaction>
</comment>
<comment type="cofactor">
    <cofactor evidence="1">
        <name>a divalent metal cation</name>
        <dbReference type="ChEBI" id="CHEBI:60240"/>
    </cofactor>
</comment>
<comment type="subcellular location">
    <subcellularLocation>
        <location evidence="1 2">Cytoplasm</location>
    </subcellularLocation>
</comment>
<comment type="similarity">
    <text evidence="1">Belongs to the Maf family. YhdE subfamily.</text>
</comment>
<protein>
    <recommendedName>
        <fullName evidence="1">dTTP/UTP pyrophosphatase</fullName>
        <shortName evidence="1">dTTPase/UTPase</shortName>
        <ecNumber evidence="1">3.6.1.9</ecNumber>
    </recommendedName>
    <alternativeName>
        <fullName evidence="1">Nucleoside triphosphate pyrophosphatase</fullName>
    </alternativeName>
    <alternativeName>
        <fullName evidence="1">Nucleotide pyrophosphatase</fullName>
        <shortName evidence="1">Nucleotide PPase</shortName>
    </alternativeName>
</protein>
<organism>
    <name type="scientific">Salmonella typhimurium (strain LT2 / SGSC1412 / ATCC 700720)</name>
    <dbReference type="NCBI Taxonomy" id="99287"/>
    <lineage>
        <taxon>Bacteria</taxon>
        <taxon>Pseudomonadati</taxon>
        <taxon>Pseudomonadota</taxon>
        <taxon>Gammaproteobacteria</taxon>
        <taxon>Enterobacterales</taxon>
        <taxon>Enterobacteriaceae</taxon>
        <taxon>Salmonella</taxon>
    </lineage>
</organism>
<sequence length="197" mass="21416">MTTLYLASGSPRRQELLTQLGFSFEQVVPGIEEQRRAQESAQQYVVRLAREKAQAGVALVPRDLPVLGADTIVVLNGEVLEKPRDAAHAAEMLRLLSGNTHQVMTAVALADSQQTLDCLVVTEVTFRTLSAQDITGYVASGEPLDKAGAYGIQGRGGCFVRKINGSYHAVVGLPLVETYELLSHFNALRDKRDKHDG</sequence>
<feature type="chain" id="PRO_0000122985" description="dTTP/UTP pyrophosphatase">
    <location>
        <begin position="1"/>
        <end position="197"/>
    </location>
</feature>
<feature type="active site" description="Proton acceptor" evidence="1">
    <location>
        <position position="70"/>
    </location>
</feature>
<feature type="site" description="Important for substrate specificity" evidence="1">
    <location>
        <position position="12"/>
    </location>
</feature>
<feature type="site" description="Important for substrate specificity" evidence="1">
    <location>
        <position position="71"/>
    </location>
</feature>
<feature type="site" description="Important for substrate specificity" evidence="1">
    <location>
        <position position="153"/>
    </location>
</feature>
<keyword id="KW-0963">Cytoplasm</keyword>
<keyword id="KW-0378">Hydrolase</keyword>
<keyword id="KW-0546">Nucleotide metabolism</keyword>
<keyword id="KW-1185">Reference proteome</keyword>
<evidence type="ECO:0000255" key="1">
    <source>
        <dbReference type="HAMAP-Rule" id="MF_00528"/>
    </source>
</evidence>
<evidence type="ECO:0000305" key="2"/>
<dbReference type="EC" id="3.6.1.9" evidence="1"/>
<dbReference type="EMBL" id="AE006468">
    <property type="protein sequence ID" value="AAL22240.1"/>
    <property type="molecule type" value="Genomic_DNA"/>
</dbReference>
<dbReference type="RefSeq" id="NP_462281.1">
    <property type="nucleotide sequence ID" value="NC_003197.2"/>
</dbReference>
<dbReference type="RefSeq" id="WP_000210306.1">
    <property type="nucleotide sequence ID" value="NC_003197.2"/>
</dbReference>
<dbReference type="SMR" id="P58630"/>
<dbReference type="STRING" id="99287.STM3371"/>
<dbReference type="PaxDb" id="99287-STM3371"/>
<dbReference type="GeneID" id="1254894"/>
<dbReference type="KEGG" id="stm:STM3371"/>
<dbReference type="PATRIC" id="fig|99287.12.peg.3572"/>
<dbReference type="HOGENOM" id="CLU_040416_2_1_6"/>
<dbReference type="OMA" id="VIGCDSV"/>
<dbReference type="PhylomeDB" id="P58630"/>
<dbReference type="BioCyc" id="SENT99287:STM3371-MONOMER"/>
<dbReference type="Proteomes" id="UP000001014">
    <property type="component" value="Chromosome"/>
</dbReference>
<dbReference type="GO" id="GO:0005737">
    <property type="term" value="C:cytoplasm"/>
    <property type="evidence" value="ECO:0007669"/>
    <property type="project" value="UniProtKB-SubCell"/>
</dbReference>
<dbReference type="GO" id="GO:0036218">
    <property type="term" value="F:dTTP diphosphatase activity"/>
    <property type="evidence" value="ECO:0007669"/>
    <property type="project" value="RHEA"/>
</dbReference>
<dbReference type="GO" id="GO:0047429">
    <property type="term" value="F:nucleoside triphosphate diphosphatase activity"/>
    <property type="evidence" value="ECO:0000318"/>
    <property type="project" value="GO_Central"/>
</dbReference>
<dbReference type="GO" id="GO:0036221">
    <property type="term" value="F:UTP diphosphatase activity"/>
    <property type="evidence" value="ECO:0007669"/>
    <property type="project" value="RHEA"/>
</dbReference>
<dbReference type="GO" id="GO:0009117">
    <property type="term" value="P:nucleotide metabolic process"/>
    <property type="evidence" value="ECO:0007669"/>
    <property type="project" value="UniProtKB-KW"/>
</dbReference>
<dbReference type="CDD" id="cd00555">
    <property type="entry name" value="Maf"/>
    <property type="match status" value="1"/>
</dbReference>
<dbReference type="FunFam" id="3.90.950.10:FF:000004">
    <property type="entry name" value="dTTP/UTP pyrophosphatase"/>
    <property type="match status" value="1"/>
</dbReference>
<dbReference type="Gene3D" id="3.90.950.10">
    <property type="match status" value="1"/>
</dbReference>
<dbReference type="HAMAP" id="MF_00528">
    <property type="entry name" value="Maf"/>
    <property type="match status" value="1"/>
</dbReference>
<dbReference type="InterPro" id="IPR029001">
    <property type="entry name" value="ITPase-like_fam"/>
</dbReference>
<dbReference type="InterPro" id="IPR003697">
    <property type="entry name" value="Maf-like"/>
</dbReference>
<dbReference type="NCBIfam" id="TIGR00172">
    <property type="entry name" value="maf"/>
    <property type="match status" value="1"/>
</dbReference>
<dbReference type="PANTHER" id="PTHR43213">
    <property type="entry name" value="BIFUNCTIONAL DTTP/UTP PYROPHOSPHATASE/METHYLTRANSFERASE PROTEIN-RELATED"/>
    <property type="match status" value="1"/>
</dbReference>
<dbReference type="PANTHER" id="PTHR43213:SF5">
    <property type="entry name" value="BIFUNCTIONAL DTTP_UTP PYROPHOSPHATASE_METHYLTRANSFERASE PROTEIN-RELATED"/>
    <property type="match status" value="1"/>
</dbReference>
<dbReference type="Pfam" id="PF02545">
    <property type="entry name" value="Maf"/>
    <property type="match status" value="1"/>
</dbReference>
<dbReference type="PIRSF" id="PIRSF006305">
    <property type="entry name" value="Maf"/>
    <property type="match status" value="1"/>
</dbReference>
<dbReference type="SUPFAM" id="SSF52972">
    <property type="entry name" value="ITPase-like"/>
    <property type="match status" value="1"/>
</dbReference>
<gene>
    <name type="primary">yhdE</name>
    <name type="ordered locus">STM3371</name>
</gene>
<name>NTPPA_SALTY</name>